<organism>
    <name type="scientific">Escherichia coli O17:K52:H18 (strain UMN026 / ExPEC)</name>
    <dbReference type="NCBI Taxonomy" id="585056"/>
    <lineage>
        <taxon>Bacteria</taxon>
        <taxon>Pseudomonadati</taxon>
        <taxon>Pseudomonadota</taxon>
        <taxon>Gammaproteobacteria</taxon>
        <taxon>Enterobacterales</taxon>
        <taxon>Enterobacteriaceae</taxon>
        <taxon>Escherichia</taxon>
    </lineage>
</organism>
<feature type="chain" id="PRO_1000145716" description="Cation/acetate symporter ActP">
    <location>
        <begin position="1"/>
        <end position="549"/>
    </location>
</feature>
<feature type="transmembrane region" description="Helical" evidence="1">
    <location>
        <begin position="33"/>
        <end position="53"/>
    </location>
</feature>
<feature type="transmembrane region" description="Helical" evidence="1">
    <location>
        <begin position="77"/>
        <end position="97"/>
    </location>
</feature>
<feature type="transmembrane region" description="Helical" evidence="1">
    <location>
        <begin position="103"/>
        <end position="123"/>
    </location>
</feature>
<feature type="transmembrane region" description="Helical" evidence="1">
    <location>
        <begin position="148"/>
        <end position="168"/>
    </location>
</feature>
<feature type="transmembrane region" description="Helical" evidence="1">
    <location>
        <begin position="183"/>
        <end position="203"/>
    </location>
</feature>
<feature type="transmembrane region" description="Helical" evidence="1">
    <location>
        <begin position="206"/>
        <end position="226"/>
    </location>
</feature>
<feature type="transmembrane region" description="Helical" evidence="1">
    <location>
        <begin position="262"/>
        <end position="282"/>
    </location>
</feature>
<feature type="transmembrane region" description="Helical" evidence="1">
    <location>
        <begin position="303"/>
        <end position="323"/>
    </location>
</feature>
<feature type="transmembrane region" description="Helical" evidence="1">
    <location>
        <begin position="355"/>
        <end position="375"/>
    </location>
</feature>
<feature type="transmembrane region" description="Helical" evidence="1">
    <location>
        <begin position="404"/>
        <end position="424"/>
    </location>
</feature>
<feature type="transmembrane region" description="Helical" evidence="1">
    <location>
        <begin position="428"/>
        <end position="448"/>
    </location>
</feature>
<feature type="transmembrane region" description="Helical" evidence="1">
    <location>
        <begin position="464"/>
        <end position="484"/>
    </location>
</feature>
<feature type="transmembrane region" description="Helical" evidence="1">
    <location>
        <begin position="493"/>
        <end position="513"/>
    </location>
</feature>
<evidence type="ECO:0000255" key="1">
    <source>
        <dbReference type="HAMAP-Rule" id="MF_01426"/>
    </source>
</evidence>
<sequence length="549" mass="59210">MKRVLTALAATLPFAANAADAISGAVERQPTNWQAIIMFLIFVVFTLGITYWASKRVRSRNDYYTAGGNITGFQNGLAIAGDYMSAASFLGISALVFTSGYDGLIYSLGFLVGWPIILFLIAERLRNLGRYTFADVASYRLKQGPIRILSACGSLVVVALYLIAQMVGAGKLIELLFGLNYHIAVVLVGVLMMMYVLFGGMLATTWVQIIKAVLLLFGASFMAFMVMKHVGFSFNNLFSEAMAVHPKGVDIMKPGGLVKDPISALSLGLGLMFGTAGLPHILMRFFTVSDAREARKSVFYATGFMGYFYILTFIIGFGAIMLVGANPEYKDAAGHLIGGNNMAAVHLANAVGGNLFLGFISAVAFATILAVVAGLTLAGASAVSHDLYANVFKKGATEREELRVSKITVLILGVIAIILGVLFENQNIAFMVGLAFAIAASCNFPIILLSMYWSKLTTRGAMMGGWLGLITAVVLMILGPTIWVQILGHEKAIFPYEYPALFSISVAFLGIWFFSATDNSAEGARERELFRAQFIRSQTGFGVEQGRAH</sequence>
<keyword id="KW-0997">Cell inner membrane</keyword>
<keyword id="KW-1003">Cell membrane</keyword>
<keyword id="KW-0406">Ion transport</keyword>
<keyword id="KW-0472">Membrane</keyword>
<keyword id="KW-0915">Sodium</keyword>
<keyword id="KW-0739">Sodium transport</keyword>
<keyword id="KW-0769">Symport</keyword>
<keyword id="KW-0812">Transmembrane</keyword>
<keyword id="KW-1133">Transmembrane helix</keyword>
<keyword id="KW-0813">Transport</keyword>
<comment type="function">
    <text evidence="1">Transports acetate.</text>
</comment>
<comment type="subcellular location">
    <subcellularLocation>
        <location evidence="1">Cell inner membrane</location>
        <topology evidence="1">Multi-pass membrane protein</topology>
    </subcellularLocation>
</comment>
<comment type="similarity">
    <text evidence="1">Belongs to the sodium:solute symporter (SSF) (TC 2.A.21) family.</text>
</comment>
<protein>
    <recommendedName>
        <fullName evidence="1">Cation/acetate symporter ActP</fullName>
    </recommendedName>
    <alternativeName>
        <fullName evidence="1">Acetate permease</fullName>
    </alternativeName>
    <alternativeName>
        <fullName evidence="1">Acetate transporter ActP</fullName>
    </alternativeName>
</protein>
<accession>B7NG10</accession>
<name>ACTP_ECOLU</name>
<gene>
    <name evidence="1" type="primary">actP</name>
    <name type="ordered locus">ECUMN_4603</name>
</gene>
<dbReference type="EMBL" id="CU928163">
    <property type="protein sequence ID" value="CAR15718.1"/>
    <property type="molecule type" value="Genomic_DNA"/>
</dbReference>
<dbReference type="RefSeq" id="WP_000832550.1">
    <property type="nucleotide sequence ID" value="NC_011751.1"/>
</dbReference>
<dbReference type="RefSeq" id="YP_002415208.1">
    <property type="nucleotide sequence ID" value="NC_011751.1"/>
</dbReference>
<dbReference type="SMR" id="B7NG10"/>
<dbReference type="STRING" id="585056.ECUMN_4603"/>
<dbReference type="GeneID" id="75169590"/>
<dbReference type="KEGG" id="eum:ECUMN_4603"/>
<dbReference type="PATRIC" id="fig|585056.7.peg.4767"/>
<dbReference type="HOGENOM" id="CLU_018808_8_3_6"/>
<dbReference type="Proteomes" id="UP000007097">
    <property type="component" value="Chromosome"/>
</dbReference>
<dbReference type="GO" id="GO:0005886">
    <property type="term" value="C:plasma membrane"/>
    <property type="evidence" value="ECO:0007669"/>
    <property type="project" value="UniProtKB-SubCell"/>
</dbReference>
<dbReference type="GO" id="GO:0015123">
    <property type="term" value="F:acetate transmembrane transporter activity"/>
    <property type="evidence" value="ECO:0007669"/>
    <property type="project" value="UniProtKB-UniRule"/>
</dbReference>
<dbReference type="GO" id="GO:0043879">
    <property type="term" value="F:glycolate transmembrane transporter activity"/>
    <property type="evidence" value="ECO:0007669"/>
    <property type="project" value="InterPro"/>
</dbReference>
<dbReference type="GO" id="GO:0015293">
    <property type="term" value="F:symporter activity"/>
    <property type="evidence" value="ECO:0007669"/>
    <property type="project" value="UniProtKB-KW"/>
</dbReference>
<dbReference type="GO" id="GO:0006847">
    <property type="term" value="P:plasma membrane acetate transport"/>
    <property type="evidence" value="ECO:0007669"/>
    <property type="project" value="TreeGrafter"/>
</dbReference>
<dbReference type="GO" id="GO:0006814">
    <property type="term" value="P:sodium ion transport"/>
    <property type="evidence" value="ECO:0007669"/>
    <property type="project" value="UniProtKB-KW"/>
</dbReference>
<dbReference type="CDD" id="cd11480">
    <property type="entry name" value="SLC5sbd_u4"/>
    <property type="match status" value="1"/>
</dbReference>
<dbReference type="FunFam" id="1.20.1730.10:FF:000001">
    <property type="entry name" value="Cation/acetate symporter ActP"/>
    <property type="match status" value="1"/>
</dbReference>
<dbReference type="Gene3D" id="1.20.1730.10">
    <property type="entry name" value="Sodium/glucose cotransporter"/>
    <property type="match status" value="1"/>
</dbReference>
<dbReference type="HAMAP" id="MF_01426">
    <property type="entry name" value="Acet_symport_ActP"/>
    <property type="match status" value="1"/>
</dbReference>
<dbReference type="InterPro" id="IPR014083">
    <property type="entry name" value="Cation/Ac_symporter_ActP"/>
</dbReference>
<dbReference type="InterPro" id="IPR038377">
    <property type="entry name" value="Na/Glc_symporter_sf"/>
</dbReference>
<dbReference type="InterPro" id="IPR001734">
    <property type="entry name" value="Na/solute_symporter"/>
</dbReference>
<dbReference type="InterPro" id="IPR018212">
    <property type="entry name" value="Na/solute_symporter_CS"/>
</dbReference>
<dbReference type="InterPro" id="IPR050277">
    <property type="entry name" value="Sodium:Solute_Symporter"/>
</dbReference>
<dbReference type="NCBIfam" id="NF006903">
    <property type="entry name" value="PRK09395.1"/>
    <property type="match status" value="1"/>
</dbReference>
<dbReference type="NCBIfam" id="NF009135">
    <property type="entry name" value="PRK12488.1"/>
    <property type="match status" value="1"/>
</dbReference>
<dbReference type="NCBIfam" id="TIGR00813">
    <property type="entry name" value="sss"/>
    <property type="match status" value="1"/>
</dbReference>
<dbReference type="NCBIfam" id="TIGR02711">
    <property type="entry name" value="symport_actP"/>
    <property type="match status" value="1"/>
</dbReference>
<dbReference type="PANTHER" id="PTHR48086:SF6">
    <property type="entry name" value="CATION_ACETATE SYMPORTER ACTP"/>
    <property type="match status" value="1"/>
</dbReference>
<dbReference type="PANTHER" id="PTHR48086">
    <property type="entry name" value="SODIUM/PROLINE SYMPORTER-RELATED"/>
    <property type="match status" value="1"/>
</dbReference>
<dbReference type="Pfam" id="PF00474">
    <property type="entry name" value="SSF"/>
    <property type="match status" value="1"/>
</dbReference>
<dbReference type="PROSITE" id="PS00456">
    <property type="entry name" value="NA_SOLUT_SYMP_1"/>
    <property type="match status" value="1"/>
</dbReference>
<dbReference type="PROSITE" id="PS00457">
    <property type="entry name" value="NA_SOLUT_SYMP_2"/>
    <property type="match status" value="1"/>
</dbReference>
<dbReference type="PROSITE" id="PS50283">
    <property type="entry name" value="NA_SOLUT_SYMP_3"/>
    <property type="match status" value="1"/>
</dbReference>
<proteinExistence type="inferred from homology"/>
<reference key="1">
    <citation type="journal article" date="2009" name="PLoS Genet.">
        <title>Organised genome dynamics in the Escherichia coli species results in highly diverse adaptive paths.</title>
        <authorList>
            <person name="Touchon M."/>
            <person name="Hoede C."/>
            <person name="Tenaillon O."/>
            <person name="Barbe V."/>
            <person name="Baeriswyl S."/>
            <person name="Bidet P."/>
            <person name="Bingen E."/>
            <person name="Bonacorsi S."/>
            <person name="Bouchier C."/>
            <person name="Bouvet O."/>
            <person name="Calteau A."/>
            <person name="Chiapello H."/>
            <person name="Clermont O."/>
            <person name="Cruveiller S."/>
            <person name="Danchin A."/>
            <person name="Diard M."/>
            <person name="Dossat C."/>
            <person name="Karoui M.E."/>
            <person name="Frapy E."/>
            <person name="Garry L."/>
            <person name="Ghigo J.M."/>
            <person name="Gilles A.M."/>
            <person name="Johnson J."/>
            <person name="Le Bouguenec C."/>
            <person name="Lescat M."/>
            <person name="Mangenot S."/>
            <person name="Martinez-Jehanne V."/>
            <person name="Matic I."/>
            <person name="Nassif X."/>
            <person name="Oztas S."/>
            <person name="Petit M.A."/>
            <person name="Pichon C."/>
            <person name="Rouy Z."/>
            <person name="Ruf C.S."/>
            <person name="Schneider D."/>
            <person name="Tourret J."/>
            <person name="Vacherie B."/>
            <person name="Vallenet D."/>
            <person name="Medigue C."/>
            <person name="Rocha E.P.C."/>
            <person name="Denamur E."/>
        </authorList>
    </citation>
    <scope>NUCLEOTIDE SEQUENCE [LARGE SCALE GENOMIC DNA]</scope>
    <source>
        <strain>UMN026 / ExPEC</strain>
    </source>
</reference>